<gene>
    <name type="ordered locus">At5g09550</name>
    <name type="ORF">F17I14.260</name>
</gene>
<name>GDI_ARATH</name>
<accession>Q9LXC0</accession>
<evidence type="ECO:0000250" key="1"/>
<evidence type="ECO:0000305" key="2"/>
<proteinExistence type="inferred from homology"/>
<comment type="function">
    <text evidence="1">Regulates the GDP/GTP exchange reaction of most RAB proteins by inhibiting the dissociation of GDP from them, and the subsequent binding of GTP.</text>
</comment>
<comment type="similarity">
    <text evidence="2">Belongs to the Rab GDI family.</text>
</comment>
<protein>
    <recommendedName>
        <fullName>Guanosine nucleotide diphosphate dissociation inhibitor At5g09550</fullName>
        <shortName>AtGDI</shortName>
    </recommendedName>
</protein>
<feature type="chain" id="PRO_0000425809" description="Guanosine nucleotide diphosphate dissociation inhibitor At5g09550">
    <location>
        <begin position="1"/>
        <end position="445"/>
    </location>
</feature>
<organism>
    <name type="scientific">Arabidopsis thaliana</name>
    <name type="common">Mouse-ear cress</name>
    <dbReference type="NCBI Taxonomy" id="3702"/>
    <lineage>
        <taxon>Eukaryota</taxon>
        <taxon>Viridiplantae</taxon>
        <taxon>Streptophyta</taxon>
        <taxon>Embryophyta</taxon>
        <taxon>Tracheophyta</taxon>
        <taxon>Spermatophyta</taxon>
        <taxon>Magnoliopsida</taxon>
        <taxon>eudicotyledons</taxon>
        <taxon>Gunneridae</taxon>
        <taxon>Pentapetalae</taxon>
        <taxon>rosids</taxon>
        <taxon>malvids</taxon>
        <taxon>Brassicales</taxon>
        <taxon>Brassicaceae</taxon>
        <taxon>Camelineae</taxon>
        <taxon>Arabidopsis</taxon>
    </lineage>
</organism>
<keyword id="KW-0343">GTPase activation</keyword>
<keyword id="KW-1185">Reference proteome</keyword>
<reference key="1">
    <citation type="journal article" date="2000" name="Nature">
        <title>Sequence and analysis of chromosome 5 of the plant Arabidopsis thaliana.</title>
        <authorList>
            <person name="Tabata S."/>
            <person name="Kaneko T."/>
            <person name="Nakamura Y."/>
            <person name="Kotani H."/>
            <person name="Kato T."/>
            <person name="Asamizu E."/>
            <person name="Miyajima N."/>
            <person name="Sasamoto S."/>
            <person name="Kimura T."/>
            <person name="Hosouchi T."/>
            <person name="Kawashima K."/>
            <person name="Kohara M."/>
            <person name="Matsumoto M."/>
            <person name="Matsuno A."/>
            <person name="Muraki A."/>
            <person name="Nakayama S."/>
            <person name="Nakazaki N."/>
            <person name="Naruo K."/>
            <person name="Okumura S."/>
            <person name="Shinpo S."/>
            <person name="Takeuchi C."/>
            <person name="Wada T."/>
            <person name="Watanabe A."/>
            <person name="Yamada M."/>
            <person name="Yasuda M."/>
            <person name="Sato S."/>
            <person name="de la Bastide M."/>
            <person name="Huang E."/>
            <person name="Spiegel L."/>
            <person name="Gnoj L."/>
            <person name="O'Shaughnessy A."/>
            <person name="Preston R."/>
            <person name="Habermann K."/>
            <person name="Murray J."/>
            <person name="Johnson D."/>
            <person name="Rohlfing T."/>
            <person name="Nelson J."/>
            <person name="Stoneking T."/>
            <person name="Pepin K."/>
            <person name="Spieth J."/>
            <person name="Sekhon M."/>
            <person name="Armstrong J."/>
            <person name="Becker M."/>
            <person name="Belter E."/>
            <person name="Cordum H."/>
            <person name="Cordes M."/>
            <person name="Courtney L."/>
            <person name="Courtney W."/>
            <person name="Dante M."/>
            <person name="Du H."/>
            <person name="Edwards J."/>
            <person name="Fryman J."/>
            <person name="Haakensen B."/>
            <person name="Lamar E."/>
            <person name="Latreille P."/>
            <person name="Leonard S."/>
            <person name="Meyer R."/>
            <person name="Mulvaney E."/>
            <person name="Ozersky P."/>
            <person name="Riley A."/>
            <person name="Strowmatt C."/>
            <person name="Wagner-McPherson C."/>
            <person name="Wollam A."/>
            <person name="Yoakum M."/>
            <person name="Bell M."/>
            <person name="Dedhia N."/>
            <person name="Parnell L."/>
            <person name="Shah R."/>
            <person name="Rodriguez M."/>
            <person name="Hoon See L."/>
            <person name="Vil D."/>
            <person name="Baker J."/>
            <person name="Kirchoff K."/>
            <person name="Toth K."/>
            <person name="King L."/>
            <person name="Bahret A."/>
            <person name="Miller B."/>
            <person name="Marra M.A."/>
            <person name="Martienssen R."/>
            <person name="McCombie W.R."/>
            <person name="Wilson R.K."/>
            <person name="Murphy G."/>
            <person name="Bancroft I."/>
            <person name="Volckaert G."/>
            <person name="Wambutt R."/>
            <person name="Duesterhoeft A."/>
            <person name="Stiekema W."/>
            <person name="Pohl T."/>
            <person name="Entian K.-D."/>
            <person name="Terryn N."/>
            <person name="Hartley N."/>
            <person name="Bent E."/>
            <person name="Johnson S."/>
            <person name="Langham S.-A."/>
            <person name="McCullagh B."/>
            <person name="Robben J."/>
            <person name="Grymonprez B."/>
            <person name="Zimmermann W."/>
            <person name="Ramsperger U."/>
            <person name="Wedler H."/>
            <person name="Balke K."/>
            <person name="Wedler E."/>
            <person name="Peters S."/>
            <person name="van Staveren M."/>
            <person name="Dirkse W."/>
            <person name="Mooijman P."/>
            <person name="Klein Lankhorst R."/>
            <person name="Weitzenegger T."/>
            <person name="Bothe G."/>
            <person name="Rose M."/>
            <person name="Hauf J."/>
            <person name="Berneiser S."/>
            <person name="Hempel S."/>
            <person name="Feldpausch M."/>
            <person name="Lamberth S."/>
            <person name="Villarroel R."/>
            <person name="Gielen J."/>
            <person name="Ardiles W."/>
            <person name="Bents O."/>
            <person name="Lemcke K."/>
            <person name="Kolesov G."/>
            <person name="Mayer K.F.X."/>
            <person name="Rudd S."/>
            <person name="Schoof H."/>
            <person name="Schueller C."/>
            <person name="Zaccaria P."/>
            <person name="Mewes H.-W."/>
            <person name="Bevan M."/>
            <person name="Fransz P.F."/>
        </authorList>
    </citation>
    <scope>NUCLEOTIDE SEQUENCE [LARGE SCALE GENOMIC DNA]</scope>
    <source>
        <strain>cv. Columbia</strain>
    </source>
</reference>
<reference key="2">
    <citation type="journal article" date="2017" name="Plant J.">
        <title>Araport11: a complete reannotation of the Arabidopsis thaliana reference genome.</title>
        <authorList>
            <person name="Cheng C.Y."/>
            <person name="Krishnakumar V."/>
            <person name="Chan A.P."/>
            <person name="Thibaud-Nissen F."/>
            <person name="Schobel S."/>
            <person name="Town C.D."/>
        </authorList>
    </citation>
    <scope>GENOME REANNOTATION</scope>
    <source>
        <strain>cv. Columbia</strain>
    </source>
</reference>
<sequence length="445" mass="49549">MDEEYDVIVLGTGLKECILSGLLSVDGLKVLHMDRNDYYGGESSSLNLTQLWKRFRGSDTPEENLGASREYNVDMIPKFIMANGLLVQTLIHTDVTKYLNFKAVDGSFVYKKGKIYKVPATDVEALKSPLMGLFEKRRARKFFIYVQDYDEKDPKSHEGLDLSKVTAREIISKYGLEDDTIDFIGHALALHNDDDYLDQPAIDFVKRIKLYAESLARFQGGSPYIYPLYGLGELPQAFARLSAVYGGTYMLNKPECKVEFDGSGKAIGVTSAGETAKCKKVVCDPSYLSEKVKKVGKVTRAVCIMSHPIPDTNDAHSVQIILPQKQLGRKSDMYLFCCSYAHNVAPKGKYIAFVSAEAETDNPEEELKPGIELLGPTDEIFYHSYDTYVPTNIQEEDNCFISATYDATTHFESTVVDVLDMYTKITGKTLDLSVDLSAASAAAEN</sequence>
<dbReference type="EMBL" id="AL353994">
    <property type="protein sequence ID" value="CAB89375.1"/>
    <property type="molecule type" value="Genomic_DNA"/>
</dbReference>
<dbReference type="EMBL" id="CP002688">
    <property type="protein sequence ID" value="AED91409.1"/>
    <property type="molecule type" value="Genomic_DNA"/>
</dbReference>
<dbReference type="PIR" id="T49943">
    <property type="entry name" value="T49943"/>
</dbReference>
<dbReference type="RefSeq" id="NP_196517.3">
    <property type="nucleotide sequence ID" value="NM_120992.5"/>
</dbReference>
<dbReference type="SMR" id="Q9LXC0"/>
<dbReference type="FunCoup" id="Q9LXC0">
    <property type="interactions" value="3292"/>
</dbReference>
<dbReference type="STRING" id="3702.Q9LXC0"/>
<dbReference type="iPTMnet" id="Q9LXC0"/>
<dbReference type="PaxDb" id="3702-AT5G09550.1"/>
<dbReference type="ProteomicsDB" id="221964"/>
<dbReference type="EnsemblPlants" id="AT5G09550.1">
    <property type="protein sequence ID" value="AT5G09550.1"/>
    <property type="gene ID" value="AT5G09550"/>
</dbReference>
<dbReference type="GeneID" id="830814"/>
<dbReference type="Gramene" id="AT5G09550.1">
    <property type="protein sequence ID" value="AT5G09550.1"/>
    <property type="gene ID" value="AT5G09550"/>
</dbReference>
<dbReference type="KEGG" id="ath:AT5G09550"/>
<dbReference type="Araport" id="AT5G09550"/>
<dbReference type="TAIR" id="AT5G09550">
    <property type="gene designation" value="GDI"/>
</dbReference>
<dbReference type="eggNOG" id="KOG1439">
    <property type="taxonomic scope" value="Eukaryota"/>
</dbReference>
<dbReference type="HOGENOM" id="CLU_021695_0_0_1"/>
<dbReference type="InParanoid" id="Q9LXC0"/>
<dbReference type="OMA" id="GRICKVP"/>
<dbReference type="OrthoDB" id="9446342at2759"/>
<dbReference type="PhylomeDB" id="Q9LXC0"/>
<dbReference type="PRO" id="PR:Q9LXC0"/>
<dbReference type="Proteomes" id="UP000006548">
    <property type="component" value="Chromosome 5"/>
</dbReference>
<dbReference type="ExpressionAtlas" id="Q9LXC0">
    <property type="expression patterns" value="baseline and differential"/>
</dbReference>
<dbReference type="GO" id="GO:0048046">
    <property type="term" value="C:apoplast"/>
    <property type="evidence" value="ECO:0000314"/>
    <property type="project" value="TAIR"/>
</dbReference>
<dbReference type="GO" id="GO:0005096">
    <property type="term" value="F:GTPase activator activity"/>
    <property type="evidence" value="ECO:0007669"/>
    <property type="project" value="UniProtKB-KW"/>
</dbReference>
<dbReference type="GO" id="GO:0005093">
    <property type="term" value="F:Rab GDP-dissociation inhibitor activity"/>
    <property type="evidence" value="ECO:0007669"/>
    <property type="project" value="InterPro"/>
</dbReference>
<dbReference type="GO" id="GO:0015031">
    <property type="term" value="P:protein transport"/>
    <property type="evidence" value="ECO:0007669"/>
    <property type="project" value="InterPro"/>
</dbReference>
<dbReference type="GO" id="GO:0007264">
    <property type="term" value="P:small GTPase-mediated signal transduction"/>
    <property type="evidence" value="ECO:0007669"/>
    <property type="project" value="InterPro"/>
</dbReference>
<dbReference type="FunFam" id="1.10.405.10:FF:000002">
    <property type="entry name" value="Guanosine nucleotide diphosphate dissociation inhibitor"/>
    <property type="match status" value="1"/>
</dbReference>
<dbReference type="FunFam" id="3.50.50.60:FF:000158">
    <property type="entry name" value="Rab GDP dissociation inhibitor"/>
    <property type="match status" value="1"/>
</dbReference>
<dbReference type="Gene3D" id="3.50.50.60">
    <property type="entry name" value="FAD/NAD(P)-binding domain"/>
    <property type="match status" value="1"/>
</dbReference>
<dbReference type="Gene3D" id="1.10.405.10">
    <property type="entry name" value="Guanine Nucleotide Dissociation Inhibitor, domain 1"/>
    <property type="match status" value="1"/>
</dbReference>
<dbReference type="Gene3D" id="3.30.519.10">
    <property type="entry name" value="Guanine Nucleotide Dissociation Inhibitor, domain 2"/>
    <property type="match status" value="1"/>
</dbReference>
<dbReference type="InterPro" id="IPR036188">
    <property type="entry name" value="FAD/NAD-bd_sf"/>
</dbReference>
<dbReference type="InterPro" id="IPR018203">
    <property type="entry name" value="GDP_dissociation_inhibitor"/>
</dbReference>
<dbReference type="InterPro" id="IPR000806">
    <property type="entry name" value="RabGDI"/>
</dbReference>
<dbReference type="PANTHER" id="PTHR11787:SF10">
    <property type="entry name" value="GUANOSINE NUCLEOTIDE DIPHOSPHATE DISSOCIATION INHIBITOR"/>
    <property type="match status" value="1"/>
</dbReference>
<dbReference type="PANTHER" id="PTHR11787">
    <property type="entry name" value="RAB GDP-DISSOCIATION INHIBITOR"/>
    <property type="match status" value="1"/>
</dbReference>
<dbReference type="Pfam" id="PF00996">
    <property type="entry name" value="GDI"/>
    <property type="match status" value="1"/>
</dbReference>
<dbReference type="PRINTS" id="PR00892">
    <property type="entry name" value="RABGDI"/>
</dbReference>
<dbReference type="PRINTS" id="PR00891">
    <property type="entry name" value="RABGDIREP"/>
</dbReference>
<dbReference type="SUPFAM" id="SSF54373">
    <property type="entry name" value="FAD-linked reductases, C-terminal domain"/>
    <property type="match status" value="1"/>
</dbReference>
<dbReference type="SUPFAM" id="SSF51905">
    <property type="entry name" value="FAD/NAD(P)-binding domain"/>
    <property type="match status" value="2"/>
</dbReference>